<proteinExistence type="evidence at transcript level"/>
<feature type="chain" id="PRO_0000341262" description="Sphingosine-1-phosphate transporter MFSD2B">
    <location>
        <begin position="1"/>
        <end position="511"/>
    </location>
</feature>
<feature type="transmembrane region" description="Helical" evidence="3">
    <location>
        <begin position="108"/>
        <end position="128"/>
    </location>
</feature>
<feature type="transmembrane region" description="Helical" evidence="3">
    <location>
        <begin position="136"/>
        <end position="156"/>
    </location>
</feature>
<feature type="transmembrane region" description="Helical" evidence="3">
    <location>
        <begin position="236"/>
        <end position="256"/>
    </location>
</feature>
<feature type="transmembrane region" description="Helical" evidence="3">
    <location>
        <begin position="280"/>
        <end position="300"/>
    </location>
</feature>
<feature type="transmembrane region" description="Helical" evidence="3">
    <location>
        <begin position="323"/>
        <end position="343"/>
    </location>
</feature>
<feature type="transmembrane region" description="Helical" evidence="3">
    <location>
        <begin position="357"/>
        <end position="377"/>
    </location>
</feature>
<feature type="transmembrane region" description="Helical" evidence="3">
    <location>
        <begin position="379"/>
        <end position="399"/>
    </location>
</feature>
<feature type="transmembrane region" description="Helical" evidence="3">
    <location>
        <begin position="415"/>
        <end position="435"/>
    </location>
</feature>
<feature type="transmembrane region" description="Helical" evidence="3">
    <location>
        <begin position="462"/>
        <end position="482"/>
    </location>
</feature>
<sequence length="511" mass="56318">MAETSRELPLSTLTASTRRALRIRARQAREAKLSVLSKVCYAIGGAPNQVSGSASAFFLQIYLLDVALISPYQASLVLSLGKTWGGITDPIVGYCISKSKWTRIGRLMPWMLGCTPFLVVSYFLLWFVPTFETGRVLWYLAFFSCFQALSTAYHVPYTTLTMFLSTDQMERDSATAYRMTVEVLGTLIGAAVQGQIVASAHTGSHCNVTNMTGNLTADFLYEPTEYITSARQVYMIAAGIIGCLYLLCISVLFLGVKERDDPYALVAGKVIPFFKGFRETMQFGPYLNLISSFLLISAAVQIQQSNFVLFCTHAADLQDHFQNLVLTILIAAVLSIPFWQWFLQKFGKKMAAFGISLMIPFSIMLVTISSLVVAYVVAVASGLSIAASLLLPWSMLPDVVDNFRLTNPQGKGLEAIFYSSFVFFTKLSAGIALGISTLSLQFADYNTSLCKQSYSVVLTLKLLIGAAPALMIIIGLTILAFYPITEDTRKETELALDVIRMRTRRSTLIVI</sequence>
<evidence type="ECO:0000250" key="1">
    <source>
        <dbReference type="UniProtKB" id="A6NFX1"/>
    </source>
</evidence>
<evidence type="ECO:0000250" key="2">
    <source>
        <dbReference type="UniProtKB" id="Q3T9M1"/>
    </source>
</evidence>
<evidence type="ECO:0000255" key="3"/>
<evidence type="ECO:0000305" key="4"/>
<gene>
    <name evidence="1" type="primary">mfsd2b</name>
</gene>
<comment type="function">
    <text evidence="2">Lipid transporter that specifically mediates export of sphingosine-1-phosphate in red blood cells and platelets. Sphingosine-1-phosphate is a signaling sphingolipid and its export from red blood cells into in the plasma is required for red blood cell morphology. Sphingosine-1-phosphate export from platelets is required for platelet aggregation and thrombus formation. In addition to export, also able to mediate S1P import.</text>
</comment>
<comment type="catalytic activity">
    <reaction evidence="2">
        <text>sphing-4-enine 1-phosphate(in) = sphing-4-enine 1-phosphate(out)</text>
        <dbReference type="Rhea" id="RHEA:38667"/>
        <dbReference type="ChEBI" id="CHEBI:60119"/>
    </reaction>
</comment>
<comment type="catalytic activity">
    <reaction evidence="2">
        <text>sphinganine 1-phosphate(in) = sphinganine 1-phosphate(out)</text>
        <dbReference type="Rhea" id="RHEA:38671"/>
        <dbReference type="ChEBI" id="CHEBI:57939"/>
    </reaction>
</comment>
<comment type="catalytic activity">
    <reaction evidence="2">
        <text>sphinga-4E,14Z-dienine-1-phosphate(in) = sphinga-4E,14Z-dienine-1-phosphate(out)</text>
        <dbReference type="Rhea" id="RHEA:70207"/>
        <dbReference type="ChEBI" id="CHEBI:149632"/>
    </reaction>
</comment>
<comment type="subcellular location">
    <subcellularLocation>
        <location evidence="2">Cell membrane</location>
        <topology evidence="3">Multi-pass membrane protein</topology>
    </subcellularLocation>
    <text evidence="2">Localizes to the cell membrane and intracellular membranes.</text>
</comment>
<comment type="similarity">
    <text evidence="4">Belongs to the major facilitator superfamily.</text>
</comment>
<name>MFS2B_XENTR</name>
<dbReference type="EMBL" id="BC135369">
    <property type="protein sequence ID" value="AAI35370.1"/>
    <property type="molecule type" value="mRNA"/>
</dbReference>
<dbReference type="RefSeq" id="NP_001096238.1">
    <property type="nucleotide sequence ID" value="NM_001102768.1"/>
</dbReference>
<dbReference type="SMR" id="A4IH46"/>
<dbReference type="STRING" id="8364.ENSXETP00000001674"/>
<dbReference type="PaxDb" id="8364-ENSXETP00000055220"/>
<dbReference type="DNASU" id="100124793"/>
<dbReference type="GeneID" id="100124793"/>
<dbReference type="KEGG" id="xtr:100124793"/>
<dbReference type="AGR" id="Xenbase:XB-GENE-6044470"/>
<dbReference type="CTD" id="388931"/>
<dbReference type="Xenbase" id="XB-GENE-6044470">
    <property type="gene designation" value="mfsd2b"/>
</dbReference>
<dbReference type="eggNOG" id="KOG4830">
    <property type="taxonomic scope" value="Eukaryota"/>
</dbReference>
<dbReference type="HOGENOM" id="CLU_027408_6_1_1"/>
<dbReference type="InParanoid" id="A4IH46"/>
<dbReference type="OMA" id="LPMAEWF"/>
<dbReference type="OrthoDB" id="197206at2759"/>
<dbReference type="PhylomeDB" id="A4IH46"/>
<dbReference type="TreeFam" id="TF331194"/>
<dbReference type="Reactome" id="R-XTR-1660661">
    <property type="pathway name" value="Sphingolipid de novo biosynthesis"/>
</dbReference>
<dbReference type="Proteomes" id="UP000008143">
    <property type="component" value="Chromosome 5"/>
</dbReference>
<dbReference type="Bgee" id="ENSXETG00000018209">
    <property type="expression patterns" value="Expressed in skeletal muscle tissue and 6 other cell types or tissues"/>
</dbReference>
<dbReference type="ExpressionAtlas" id="A4IH46">
    <property type="expression patterns" value="baseline"/>
</dbReference>
<dbReference type="GO" id="GO:0005886">
    <property type="term" value="C:plasma membrane"/>
    <property type="evidence" value="ECO:0000250"/>
    <property type="project" value="UniProtKB"/>
</dbReference>
<dbReference type="GO" id="GO:0046624">
    <property type="term" value="F:sphingolipid transporter activity"/>
    <property type="evidence" value="ECO:0000250"/>
    <property type="project" value="UniProtKB"/>
</dbReference>
<dbReference type="GO" id="GO:0015293">
    <property type="term" value="F:symporter activity"/>
    <property type="evidence" value="ECO:0007669"/>
    <property type="project" value="InterPro"/>
</dbReference>
<dbReference type="GO" id="GO:0008643">
    <property type="term" value="P:carbohydrate transport"/>
    <property type="evidence" value="ECO:0007669"/>
    <property type="project" value="InterPro"/>
</dbReference>
<dbReference type="GO" id="GO:0006869">
    <property type="term" value="P:lipid transport"/>
    <property type="evidence" value="ECO:0000250"/>
    <property type="project" value="UniProtKB"/>
</dbReference>
<dbReference type="GO" id="GO:1901731">
    <property type="term" value="P:positive regulation of platelet aggregation"/>
    <property type="evidence" value="ECO:0000250"/>
    <property type="project" value="UniProtKB"/>
</dbReference>
<dbReference type="GO" id="GO:0003376">
    <property type="term" value="P:sphingosine-1-phosphate receptor signaling pathway"/>
    <property type="evidence" value="ECO:0000250"/>
    <property type="project" value="UniProtKB"/>
</dbReference>
<dbReference type="CDD" id="cd17452">
    <property type="entry name" value="MFS_MFSD2B"/>
    <property type="match status" value="1"/>
</dbReference>
<dbReference type="FunFam" id="1.20.1250.20:FF:000185">
    <property type="entry name" value="sodium-dependent lysophosphatidylcholine symporter 1 isoform X1"/>
    <property type="match status" value="1"/>
</dbReference>
<dbReference type="FunFam" id="1.20.1250.20:FF:000183">
    <property type="entry name" value="sodium-dependent lysophosphatidylcholine symporter 1 isoform X2"/>
    <property type="match status" value="1"/>
</dbReference>
<dbReference type="Gene3D" id="1.20.1250.20">
    <property type="entry name" value="MFS general substrate transporter like domains"/>
    <property type="match status" value="1"/>
</dbReference>
<dbReference type="InterPro" id="IPR039672">
    <property type="entry name" value="MFS_2"/>
</dbReference>
<dbReference type="InterPro" id="IPR036259">
    <property type="entry name" value="MFS_trans_sf"/>
</dbReference>
<dbReference type="PANTHER" id="PTHR11328">
    <property type="entry name" value="MAJOR FACILITATOR SUPERFAMILY DOMAIN-CONTAINING PROTEIN"/>
    <property type="match status" value="1"/>
</dbReference>
<dbReference type="PANTHER" id="PTHR11328:SF30">
    <property type="entry name" value="SPHINGOSINE-1-PHOSPHATE TRANSPORTER MFSD2B"/>
    <property type="match status" value="1"/>
</dbReference>
<dbReference type="Pfam" id="PF13347">
    <property type="entry name" value="MFS_2"/>
    <property type="match status" value="1"/>
</dbReference>
<dbReference type="SUPFAM" id="SSF103473">
    <property type="entry name" value="MFS general substrate transporter"/>
    <property type="match status" value="1"/>
</dbReference>
<accession>A4IH46</accession>
<reference key="1">
    <citation type="submission" date="2007-03" db="EMBL/GenBank/DDBJ databases">
        <authorList>
            <consortium name="NIH - Xenopus Gene Collection (XGC) project"/>
        </authorList>
    </citation>
    <scope>NUCLEOTIDE SEQUENCE [LARGE SCALE MRNA]</scope>
    <source>
        <tissue>Tadpole</tissue>
    </source>
</reference>
<organism>
    <name type="scientific">Xenopus tropicalis</name>
    <name type="common">Western clawed frog</name>
    <name type="synonym">Silurana tropicalis</name>
    <dbReference type="NCBI Taxonomy" id="8364"/>
    <lineage>
        <taxon>Eukaryota</taxon>
        <taxon>Metazoa</taxon>
        <taxon>Chordata</taxon>
        <taxon>Craniata</taxon>
        <taxon>Vertebrata</taxon>
        <taxon>Euteleostomi</taxon>
        <taxon>Amphibia</taxon>
        <taxon>Batrachia</taxon>
        <taxon>Anura</taxon>
        <taxon>Pipoidea</taxon>
        <taxon>Pipidae</taxon>
        <taxon>Xenopodinae</taxon>
        <taxon>Xenopus</taxon>
        <taxon>Silurana</taxon>
    </lineage>
</organism>
<protein>
    <recommendedName>
        <fullName evidence="4">Sphingosine-1-phosphate transporter MFSD2B</fullName>
    </recommendedName>
    <alternativeName>
        <fullName evidence="4">Major facilitator superfamily domain-containing protein 2B</fullName>
    </alternativeName>
</protein>
<keyword id="KW-1003">Cell membrane</keyword>
<keyword id="KW-0445">Lipid transport</keyword>
<keyword id="KW-0472">Membrane</keyword>
<keyword id="KW-1185">Reference proteome</keyword>
<keyword id="KW-0812">Transmembrane</keyword>
<keyword id="KW-1133">Transmembrane helix</keyword>
<keyword id="KW-0813">Transport</keyword>